<gene>
    <name evidence="1" type="primary">panD</name>
    <name type="ordered locus">NT01CX_1073</name>
</gene>
<name>PAND_CLONN</name>
<dbReference type="EC" id="4.1.1.11" evidence="1"/>
<dbReference type="EMBL" id="CP000382">
    <property type="protein sequence ID" value="ABK61440.1"/>
    <property type="molecule type" value="Genomic_DNA"/>
</dbReference>
<dbReference type="RefSeq" id="WP_011721177.1">
    <property type="nucleotide sequence ID" value="NC_008593.1"/>
</dbReference>
<dbReference type="SMR" id="A0PXQ5"/>
<dbReference type="STRING" id="386415.NT01CX_1073"/>
<dbReference type="KEGG" id="cno:NT01CX_1073"/>
<dbReference type="eggNOG" id="COG0853">
    <property type="taxonomic scope" value="Bacteria"/>
</dbReference>
<dbReference type="HOGENOM" id="CLU_115305_2_0_9"/>
<dbReference type="UniPathway" id="UPA00028">
    <property type="reaction ID" value="UER00002"/>
</dbReference>
<dbReference type="Proteomes" id="UP000008220">
    <property type="component" value="Chromosome"/>
</dbReference>
<dbReference type="GO" id="GO:0005829">
    <property type="term" value="C:cytosol"/>
    <property type="evidence" value="ECO:0007669"/>
    <property type="project" value="TreeGrafter"/>
</dbReference>
<dbReference type="GO" id="GO:0004068">
    <property type="term" value="F:aspartate 1-decarboxylase activity"/>
    <property type="evidence" value="ECO:0007669"/>
    <property type="project" value="UniProtKB-UniRule"/>
</dbReference>
<dbReference type="GO" id="GO:0006523">
    <property type="term" value="P:alanine biosynthetic process"/>
    <property type="evidence" value="ECO:0007669"/>
    <property type="project" value="InterPro"/>
</dbReference>
<dbReference type="GO" id="GO:0015940">
    <property type="term" value="P:pantothenate biosynthetic process"/>
    <property type="evidence" value="ECO:0007669"/>
    <property type="project" value="UniProtKB-UniRule"/>
</dbReference>
<dbReference type="CDD" id="cd06919">
    <property type="entry name" value="Asp_decarbox"/>
    <property type="match status" value="1"/>
</dbReference>
<dbReference type="Gene3D" id="2.40.40.20">
    <property type="match status" value="1"/>
</dbReference>
<dbReference type="HAMAP" id="MF_00446">
    <property type="entry name" value="PanD"/>
    <property type="match status" value="1"/>
</dbReference>
<dbReference type="InterPro" id="IPR009010">
    <property type="entry name" value="Asp_de-COase-like_dom_sf"/>
</dbReference>
<dbReference type="InterPro" id="IPR003190">
    <property type="entry name" value="Asp_decarbox"/>
</dbReference>
<dbReference type="NCBIfam" id="TIGR00223">
    <property type="entry name" value="panD"/>
    <property type="match status" value="1"/>
</dbReference>
<dbReference type="PANTHER" id="PTHR21012">
    <property type="entry name" value="ASPARTATE 1-DECARBOXYLASE"/>
    <property type="match status" value="1"/>
</dbReference>
<dbReference type="PANTHER" id="PTHR21012:SF0">
    <property type="entry name" value="ASPARTATE 1-DECARBOXYLASE"/>
    <property type="match status" value="1"/>
</dbReference>
<dbReference type="Pfam" id="PF02261">
    <property type="entry name" value="Asp_decarbox"/>
    <property type="match status" value="1"/>
</dbReference>
<dbReference type="PIRSF" id="PIRSF006246">
    <property type="entry name" value="Asp_decarbox"/>
    <property type="match status" value="1"/>
</dbReference>
<dbReference type="SUPFAM" id="SSF50692">
    <property type="entry name" value="ADC-like"/>
    <property type="match status" value="1"/>
</dbReference>
<protein>
    <recommendedName>
        <fullName evidence="1">Aspartate 1-decarboxylase</fullName>
        <ecNumber evidence="1">4.1.1.11</ecNumber>
    </recommendedName>
    <alternativeName>
        <fullName evidence="1">Aspartate alpha-decarboxylase</fullName>
    </alternativeName>
    <component>
        <recommendedName>
            <fullName evidence="1">Aspartate 1-decarboxylase beta chain</fullName>
        </recommendedName>
    </component>
    <component>
        <recommendedName>
            <fullName evidence="1">Aspartate 1-decarboxylase alpha chain</fullName>
        </recommendedName>
    </component>
</protein>
<keyword id="KW-0068">Autocatalytic cleavage</keyword>
<keyword id="KW-0963">Cytoplasm</keyword>
<keyword id="KW-0210">Decarboxylase</keyword>
<keyword id="KW-0456">Lyase</keyword>
<keyword id="KW-0566">Pantothenate biosynthesis</keyword>
<keyword id="KW-0670">Pyruvate</keyword>
<keyword id="KW-1185">Reference proteome</keyword>
<keyword id="KW-0704">Schiff base</keyword>
<keyword id="KW-0865">Zymogen</keyword>
<comment type="function">
    <text evidence="1">Catalyzes the pyruvoyl-dependent decarboxylation of aspartate to produce beta-alanine.</text>
</comment>
<comment type="catalytic activity">
    <reaction evidence="1">
        <text>L-aspartate + H(+) = beta-alanine + CO2</text>
        <dbReference type="Rhea" id="RHEA:19497"/>
        <dbReference type="ChEBI" id="CHEBI:15378"/>
        <dbReference type="ChEBI" id="CHEBI:16526"/>
        <dbReference type="ChEBI" id="CHEBI:29991"/>
        <dbReference type="ChEBI" id="CHEBI:57966"/>
        <dbReference type="EC" id="4.1.1.11"/>
    </reaction>
</comment>
<comment type="cofactor">
    <cofactor evidence="1">
        <name>pyruvate</name>
        <dbReference type="ChEBI" id="CHEBI:15361"/>
    </cofactor>
    <text evidence="1">Binds 1 pyruvoyl group covalently per subunit.</text>
</comment>
<comment type="pathway">
    <text evidence="1">Cofactor biosynthesis; (R)-pantothenate biosynthesis; beta-alanine from L-aspartate: step 1/1.</text>
</comment>
<comment type="subunit">
    <text evidence="1">Heterooctamer of four alpha and four beta subunits.</text>
</comment>
<comment type="subcellular location">
    <subcellularLocation>
        <location evidence="1">Cytoplasm</location>
    </subcellularLocation>
</comment>
<comment type="PTM">
    <text evidence="1">Is synthesized initially as an inactive proenzyme, which is activated by self-cleavage at a specific serine bond to produce a beta-subunit with a hydroxyl group at its C-terminus and an alpha-subunit with a pyruvoyl group at its N-terminus.</text>
</comment>
<comment type="similarity">
    <text evidence="1">Belongs to the PanD family.</text>
</comment>
<organism>
    <name type="scientific">Clostridium novyi (strain NT)</name>
    <dbReference type="NCBI Taxonomy" id="386415"/>
    <lineage>
        <taxon>Bacteria</taxon>
        <taxon>Bacillati</taxon>
        <taxon>Bacillota</taxon>
        <taxon>Clostridia</taxon>
        <taxon>Eubacteriales</taxon>
        <taxon>Clostridiaceae</taxon>
        <taxon>Clostridium</taxon>
    </lineage>
</organism>
<evidence type="ECO:0000255" key="1">
    <source>
        <dbReference type="HAMAP-Rule" id="MF_00446"/>
    </source>
</evidence>
<sequence length="123" mass="13841">MELNMLKSKIHRVTVTQAELSYVGSITIDKALMKAANILEYEKVQIVDIDNGARFETYVIPGEENSKVICLNGAAARCVQVGDKVIIMCYCSMDEQEAKDYKPIVVFANEDNTINKISNYERN</sequence>
<accession>A0PXQ5</accession>
<reference key="1">
    <citation type="journal article" date="2006" name="Nat. Biotechnol.">
        <title>The genome and transcriptomes of the anti-tumor agent Clostridium novyi-NT.</title>
        <authorList>
            <person name="Bettegowda C."/>
            <person name="Huang X."/>
            <person name="Lin J."/>
            <person name="Cheong I."/>
            <person name="Kohli M."/>
            <person name="Szabo S.A."/>
            <person name="Zhang X."/>
            <person name="Diaz L.A. Jr."/>
            <person name="Velculescu V.E."/>
            <person name="Parmigiani G."/>
            <person name="Kinzler K.W."/>
            <person name="Vogelstein B."/>
            <person name="Zhou S."/>
        </authorList>
    </citation>
    <scope>NUCLEOTIDE SEQUENCE [LARGE SCALE GENOMIC DNA]</scope>
    <source>
        <strain>NT</strain>
    </source>
</reference>
<feature type="chain" id="PRO_0000306953" description="Aspartate 1-decarboxylase beta chain" evidence="1">
    <location>
        <begin position="1"/>
        <end position="24"/>
    </location>
</feature>
<feature type="chain" id="PRO_0000306954" description="Aspartate 1-decarboxylase alpha chain" evidence="1">
    <location>
        <begin position="25"/>
        <end position="123"/>
    </location>
</feature>
<feature type="active site" description="Schiff-base intermediate with substrate; via pyruvic acid" evidence="1">
    <location>
        <position position="25"/>
    </location>
</feature>
<feature type="active site" description="Proton donor" evidence="1">
    <location>
        <position position="58"/>
    </location>
</feature>
<feature type="binding site" evidence="1">
    <location>
        <position position="57"/>
    </location>
    <ligand>
        <name>substrate</name>
    </ligand>
</feature>
<feature type="binding site" evidence="1">
    <location>
        <begin position="73"/>
        <end position="75"/>
    </location>
    <ligand>
        <name>substrate</name>
    </ligand>
</feature>
<feature type="modified residue" description="Pyruvic acid (Ser)" evidence="1">
    <location>
        <position position="25"/>
    </location>
</feature>
<proteinExistence type="inferred from homology"/>